<sequence>MNPSEMQRKAPPRRRRHRNRAPLTHKMNKMVTSEEQMKLPSTKKAEPPTWAQLKKLTQLATKYLENTKVTQTPESMLLAALMIVSMVSAGVLNSSEETATIENGP</sequence>
<comment type="function">
    <text evidence="1">Retroviral replication requires the nuclear export and translation of unspliced, singly-spliced and multiply-spliced derivatives of the initial genomic transcript. Rec interacts with a highly structured RNA element (RcRE) present in the viral 3'LTR and recruits the cellular nuclear export machinery. This permits export to the cytoplasm of unspliced genomic or incompletely spliced subgenomic viral transcripts (By similarity).</text>
</comment>
<comment type="subunit">
    <text evidence="1">Forms homodimers, homotrimers, and homotetramers via a C-terminal domain. Associates with XPO1 and with ZNF145 (By similarity).</text>
</comment>
<comment type="subcellular location">
    <subcellularLocation>
        <location evidence="1">Cytoplasm</location>
    </subcellularLocation>
    <subcellularLocation>
        <location evidence="1">Nucleus</location>
        <location evidence="1">Nucleolus</location>
    </subcellularLocation>
    <text evidence="1">Shuttles between the nucleus and the cytoplasm. When in the nucleus, resides in the nucleolus (By similarity).</text>
</comment>
<comment type="miscellaneous">
    <text>Despite functional similarity, Rec shares almost no sequence homology with HIV-1 Rev and HTLV-1 Rex.</text>
</comment>
<comment type="miscellaneous">
    <text>Insertional polymorphism. Provirus present in 16% of tested individuals.</text>
</comment>
<comment type="miscellaneous">
    <text>Has a type 2 genome. The HERV-K(HML-2) family contains type 1 and type 2 genomes depending on the absence or presence of 292 nucleotides at the 5'-end of the env gene. Rec proteins are translated from a doubly spliced transcript expressed exclusively by HERV-K(HML-2) type 2 proviral genomes. The first exon comprises the 87 N-terminal amino acids of the HERV-K(HMLM-2) type 2 envelope protein. The second exon (18 amino acids) is positioned in the 3' part of the proviral genome.</text>
</comment>
<comment type="miscellaneous">
    <text>Intragenic, in first intron of DEFB107 gene.</text>
</comment>
<organism>
    <name type="scientific">Homo sapiens</name>
    <name type="common">Human</name>
    <dbReference type="NCBI Taxonomy" id="9606"/>
    <lineage>
        <taxon>Eukaryota</taxon>
        <taxon>Metazoa</taxon>
        <taxon>Chordata</taxon>
        <taxon>Craniata</taxon>
        <taxon>Vertebrata</taxon>
        <taxon>Euteleostomi</taxon>
        <taxon>Mammalia</taxon>
        <taxon>Eutheria</taxon>
        <taxon>Euarchontoglires</taxon>
        <taxon>Primates</taxon>
        <taxon>Haplorrhini</taxon>
        <taxon>Catarrhini</taxon>
        <taxon>Hominidae</taxon>
        <taxon>Homo</taxon>
    </lineage>
</organism>
<proteinExistence type="evidence at protein level"/>
<accession>P61575</accession>
<reference key="1">
    <citation type="journal article" date="2006" name="Nature">
        <title>DNA sequence and analysis of human chromosome 8.</title>
        <authorList>
            <person name="Nusbaum C."/>
            <person name="Mikkelsen T.S."/>
            <person name="Zody M.C."/>
            <person name="Asakawa S."/>
            <person name="Taudien S."/>
            <person name="Garber M."/>
            <person name="Kodira C.D."/>
            <person name="Schueler M.G."/>
            <person name="Shimizu A."/>
            <person name="Whittaker C.A."/>
            <person name="Chang J.L."/>
            <person name="Cuomo C.A."/>
            <person name="Dewar K."/>
            <person name="FitzGerald M.G."/>
            <person name="Yang X."/>
            <person name="Allen N.R."/>
            <person name="Anderson S."/>
            <person name="Asakawa T."/>
            <person name="Blechschmidt K."/>
            <person name="Bloom T."/>
            <person name="Borowsky M.L."/>
            <person name="Butler J."/>
            <person name="Cook A."/>
            <person name="Corum B."/>
            <person name="DeArellano K."/>
            <person name="DeCaprio D."/>
            <person name="Dooley K.T."/>
            <person name="Dorris L. III"/>
            <person name="Engels R."/>
            <person name="Gloeckner G."/>
            <person name="Hafez N."/>
            <person name="Hagopian D.S."/>
            <person name="Hall J.L."/>
            <person name="Ishikawa S.K."/>
            <person name="Jaffe D.B."/>
            <person name="Kamat A."/>
            <person name="Kudoh J."/>
            <person name="Lehmann R."/>
            <person name="Lokitsang T."/>
            <person name="Macdonald P."/>
            <person name="Major J.E."/>
            <person name="Matthews C.D."/>
            <person name="Mauceli E."/>
            <person name="Menzel U."/>
            <person name="Mihalev A.H."/>
            <person name="Minoshima S."/>
            <person name="Murayama Y."/>
            <person name="Naylor J.W."/>
            <person name="Nicol R."/>
            <person name="Nguyen C."/>
            <person name="O'Leary S.B."/>
            <person name="O'Neill K."/>
            <person name="Parker S.C.J."/>
            <person name="Polley A."/>
            <person name="Raymond C.K."/>
            <person name="Reichwald K."/>
            <person name="Rodriguez J."/>
            <person name="Sasaki T."/>
            <person name="Schilhabel M."/>
            <person name="Siddiqui R."/>
            <person name="Smith C.L."/>
            <person name="Sneddon T.P."/>
            <person name="Talamas J.A."/>
            <person name="Tenzin P."/>
            <person name="Topham K."/>
            <person name="Venkataraman V."/>
            <person name="Wen G."/>
            <person name="Yamazaki S."/>
            <person name="Young S.K."/>
            <person name="Zeng Q."/>
            <person name="Zimmer A.R."/>
            <person name="Rosenthal A."/>
            <person name="Birren B.W."/>
            <person name="Platzer M."/>
            <person name="Shimizu N."/>
            <person name="Lander E.S."/>
        </authorList>
    </citation>
    <scope>NUCLEOTIDE SEQUENCE [LARGE SCALE GENOMIC DNA]</scope>
</reference>
<reference key="2">
    <citation type="journal article" date="2001" name="Curr. Biol.">
        <title>Insertional polymorphisms of full-length endogenous retroviruses in humans.</title>
        <authorList>
            <person name="Turner G."/>
            <person name="Barbulescu M."/>
            <person name="Su M."/>
            <person name="Jensen-Seaman M.I."/>
            <person name="Kidd K.K."/>
            <person name="Lenz J."/>
        </authorList>
    </citation>
    <scope>IDENTIFICATION</scope>
</reference>
<reference key="3">
    <citation type="journal article" date="2004" name="Virology">
        <title>Human endogenous retrovirus HERV-K(HML-2) proviruses with Rec protein coding capacity and transcriptional activity.</title>
        <authorList>
            <person name="Mayer J."/>
            <person name="Ehlhardt S."/>
            <person name="Seifert M."/>
            <person name="Sauter M."/>
            <person name="Mueller-Lantzsch N."/>
            <person name="Mehraein Y."/>
            <person name="Zang K.-D."/>
            <person name="Meese E.U."/>
        </authorList>
    </citation>
    <scope>CHARACTERIZATION</scope>
</reference>
<feature type="chain" id="PRO_0000186779" description="Endogenous retrovirus group K member 8 Rec protein">
    <location>
        <begin position="1"/>
        <end position="105"/>
    </location>
</feature>
<feature type="region of interest" description="Disordered" evidence="3">
    <location>
        <begin position="1"/>
        <end position="48"/>
    </location>
</feature>
<feature type="short sequence motif" description="Nuclear localization signal" evidence="2">
    <location>
        <begin position="13"/>
        <end position="20"/>
    </location>
</feature>
<feature type="short sequence motif" description="Nuclear export signal" evidence="2">
    <location>
        <begin position="50"/>
        <end position="59"/>
    </location>
</feature>
<feature type="compositionally biased region" description="Basic residues" evidence="3">
    <location>
        <begin position="10"/>
        <end position="20"/>
    </location>
</feature>
<name>RECK8_HUMAN</name>
<gene>
    <name type="primary">ERVK-8</name>
</gene>
<evidence type="ECO:0000250" key="1"/>
<evidence type="ECO:0000255" key="2"/>
<evidence type="ECO:0000256" key="3">
    <source>
        <dbReference type="SAM" id="MobiDB-lite"/>
    </source>
</evidence>
<protein>
    <recommendedName>
        <fullName>Endogenous retrovirus group K member 8 Rec protein</fullName>
    </recommendedName>
    <alternativeName>
        <fullName>HERV-K115 Rec protein</fullName>
    </alternativeName>
    <alternativeName>
        <fullName>HERV-K_8p23.1 provirus Rec protein</fullName>
    </alternativeName>
</protein>
<keyword id="KW-0963">Cytoplasm</keyword>
<keyword id="KW-0895">ERV</keyword>
<keyword id="KW-0509">mRNA transport</keyword>
<keyword id="KW-0539">Nucleus</keyword>
<keyword id="KW-1185">Reference proteome</keyword>
<keyword id="KW-0694">RNA-binding</keyword>
<keyword id="KW-0813">Transport</keyword>
<keyword id="KW-0814">Transposable element</keyword>
<dbReference type="EMBL" id="AC134684">
    <property type="status" value="NOT_ANNOTATED_CDS"/>
    <property type="molecule type" value="Genomic_DNA"/>
</dbReference>
<dbReference type="SMR" id="P61575"/>
<dbReference type="BioMuta" id="HGNC:32302"/>
<dbReference type="MassIVE" id="P61575"/>
<dbReference type="PeptideAtlas" id="P61575"/>
<dbReference type="GeneCards" id="ERVK-8"/>
<dbReference type="HGNC" id="HGNC:32302">
    <property type="gene designation" value="ERVK-8"/>
</dbReference>
<dbReference type="neXtProt" id="NX_P61575"/>
<dbReference type="PhylomeDB" id="P61575"/>
<dbReference type="Pharos" id="P61575">
    <property type="development level" value="Tdark"/>
</dbReference>
<dbReference type="Proteomes" id="UP000005640">
    <property type="component" value="Unplaced"/>
</dbReference>
<dbReference type="GO" id="GO:0005737">
    <property type="term" value="C:cytoplasm"/>
    <property type="evidence" value="ECO:0007669"/>
    <property type="project" value="UniProtKB-SubCell"/>
</dbReference>
<dbReference type="GO" id="GO:0005730">
    <property type="term" value="C:nucleolus"/>
    <property type="evidence" value="ECO:0007669"/>
    <property type="project" value="UniProtKB-SubCell"/>
</dbReference>
<dbReference type="GO" id="GO:0003723">
    <property type="term" value="F:RNA binding"/>
    <property type="evidence" value="ECO:0007669"/>
    <property type="project" value="UniProtKB-KW"/>
</dbReference>
<dbReference type="GO" id="GO:0051028">
    <property type="term" value="P:mRNA transport"/>
    <property type="evidence" value="ECO:0007669"/>
    <property type="project" value="UniProtKB-KW"/>
</dbReference>
<dbReference type="Pfam" id="PF15695">
    <property type="entry name" value="HERV-K_REC"/>
    <property type="match status" value="1"/>
</dbReference>